<keyword id="KW-0687">Ribonucleoprotein</keyword>
<keyword id="KW-0689">Ribosomal protein</keyword>
<feature type="chain" id="PRO_1000128082" description="Small ribosomal subunit protein uS9">
    <location>
        <begin position="1"/>
        <end position="130"/>
    </location>
</feature>
<name>RS9_BACMK</name>
<sequence>MAQVQYYGTGRRKSSVARVRLVPGEGRVIINGRDFENYIPFAALREVVKQPLVATETLGNYNVLVNVNGGGYTGQAGAIRHGISRALLKADPEYRLTLKRAGLLTRDARMKERKKYGLKGARRAPQFSKR</sequence>
<evidence type="ECO:0000255" key="1">
    <source>
        <dbReference type="HAMAP-Rule" id="MF_00532"/>
    </source>
</evidence>
<evidence type="ECO:0000305" key="2"/>
<organism>
    <name type="scientific">Bacillus mycoides (strain KBAB4)</name>
    <name type="common">Bacillus weihenstephanensis</name>
    <dbReference type="NCBI Taxonomy" id="315730"/>
    <lineage>
        <taxon>Bacteria</taxon>
        <taxon>Bacillati</taxon>
        <taxon>Bacillota</taxon>
        <taxon>Bacilli</taxon>
        <taxon>Bacillales</taxon>
        <taxon>Bacillaceae</taxon>
        <taxon>Bacillus</taxon>
        <taxon>Bacillus cereus group</taxon>
    </lineage>
</organism>
<comment type="similarity">
    <text evidence="1">Belongs to the universal ribosomal protein uS9 family.</text>
</comment>
<reference key="1">
    <citation type="journal article" date="2008" name="Chem. Biol. Interact.">
        <title>Extending the Bacillus cereus group genomics to putative food-borne pathogens of different toxicity.</title>
        <authorList>
            <person name="Lapidus A."/>
            <person name="Goltsman E."/>
            <person name="Auger S."/>
            <person name="Galleron N."/>
            <person name="Segurens B."/>
            <person name="Dossat C."/>
            <person name="Land M.L."/>
            <person name="Broussolle V."/>
            <person name="Brillard J."/>
            <person name="Guinebretiere M.-H."/>
            <person name="Sanchis V."/>
            <person name="Nguen-the C."/>
            <person name="Lereclus D."/>
            <person name="Richardson P."/>
            <person name="Wincker P."/>
            <person name="Weissenbach J."/>
            <person name="Ehrlich S.D."/>
            <person name="Sorokin A."/>
        </authorList>
    </citation>
    <scope>NUCLEOTIDE SEQUENCE [LARGE SCALE GENOMIC DNA]</scope>
    <source>
        <strain>KBAB4</strain>
    </source>
</reference>
<protein>
    <recommendedName>
        <fullName evidence="1">Small ribosomal subunit protein uS9</fullName>
    </recommendedName>
    <alternativeName>
        <fullName evidence="2">30S ribosomal protein S9</fullName>
    </alternativeName>
</protein>
<accession>A9VPB1</accession>
<proteinExistence type="inferred from homology"/>
<gene>
    <name evidence="1" type="primary">rpsI</name>
    <name type="ordered locus">BcerKBAB4_0139</name>
</gene>
<dbReference type="EMBL" id="CP000903">
    <property type="protein sequence ID" value="ABY41408.1"/>
    <property type="molecule type" value="Genomic_DNA"/>
</dbReference>
<dbReference type="RefSeq" id="WP_002009728.1">
    <property type="nucleotide sequence ID" value="NZ_CAKMRX030000129.1"/>
</dbReference>
<dbReference type="SMR" id="A9VPB1"/>
<dbReference type="GeneID" id="66264787"/>
<dbReference type="KEGG" id="bwe:BcerKBAB4_0139"/>
<dbReference type="eggNOG" id="COG0103">
    <property type="taxonomic scope" value="Bacteria"/>
</dbReference>
<dbReference type="HOGENOM" id="CLU_046483_2_1_9"/>
<dbReference type="Proteomes" id="UP000002154">
    <property type="component" value="Chromosome"/>
</dbReference>
<dbReference type="GO" id="GO:0022627">
    <property type="term" value="C:cytosolic small ribosomal subunit"/>
    <property type="evidence" value="ECO:0007669"/>
    <property type="project" value="TreeGrafter"/>
</dbReference>
<dbReference type="GO" id="GO:0003723">
    <property type="term" value="F:RNA binding"/>
    <property type="evidence" value="ECO:0007669"/>
    <property type="project" value="TreeGrafter"/>
</dbReference>
<dbReference type="GO" id="GO:0003735">
    <property type="term" value="F:structural constituent of ribosome"/>
    <property type="evidence" value="ECO:0007669"/>
    <property type="project" value="InterPro"/>
</dbReference>
<dbReference type="GO" id="GO:0006412">
    <property type="term" value="P:translation"/>
    <property type="evidence" value="ECO:0007669"/>
    <property type="project" value="UniProtKB-UniRule"/>
</dbReference>
<dbReference type="FunFam" id="3.30.230.10:FF:000001">
    <property type="entry name" value="30S ribosomal protein S9"/>
    <property type="match status" value="1"/>
</dbReference>
<dbReference type="Gene3D" id="3.30.230.10">
    <property type="match status" value="1"/>
</dbReference>
<dbReference type="HAMAP" id="MF_00532_B">
    <property type="entry name" value="Ribosomal_uS9_B"/>
    <property type="match status" value="1"/>
</dbReference>
<dbReference type="InterPro" id="IPR020568">
    <property type="entry name" value="Ribosomal_Su5_D2-typ_SF"/>
</dbReference>
<dbReference type="InterPro" id="IPR000754">
    <property type="entry name" value="Ribosomal_uS9"/>
</dbReference>
<dbReference type="InterPro" id="IPR023035">
    <property type="entry name" value="Ribosomal_uS9_bac/plastid"/>
</dbReference>
<dbReference type="InterPro" id="IPR020574">
    <property type="entry name" value="Ribosomal_uS9_CS"/>
</dbReference>
<dbReference type="InterPro" id="IPR014721">
    <property type="entry name" value="Ribsml_uS5_D2-typ_fold_subgr"/>
</dbReference>
<dbReference type="NCBIfam" id="NF001099">
    <property type="entry name" value="PRK00132.1"/>
    <property type="match status" value="1"/>
</dbReference>
<dbReference type="PANTHER" id="PTHR21569">
    <property type="entry name" value="RIBOSOMAL PROTEIN S9"/>
    <property type="match status" value="1"/>
</dbReference>
<dbReference type="PANTHER" id="PTHR21569:SF1">
    <property type="entry name" value="SMALL RIBOSOMAL SUBUNIT PROTEIN US9M"/>
    <property type="match status" value="1"/>
</dbReference>
<dbReference type="Pfam" id="PF00380">
    <property type="entry name" value="Ribosomal_S9"/>
    <property type="match status" value="1"/>
</dbReference>
<dbReference type="SUPFAM" id="SSF54211">
    <property type="entry name" value="Ribosomal protein S5 domain 2-like"/>
    <property type="match status" value="1"/>
</dbReference>
<dbReference type="PROSITE" id="PS00360">
    <property type="entry name" value="RIBOSOMAL_S9"/>
    <property type="match status" value="1"/>
</dbReference>